<sequence length="712" mass="77500">MFDTHTVEIEWAGRPLKLETGKIARQADGAVLATYGETVVLATVVSAKAPKPGQDFFPLTVNYQEKTYAAGKIPGGYFKREGRPSEKETLVSRLIDRPIRPLFPEGYKNDTQVVVTVVQHDLENDPDVLSMVAASAALTLSGVPFMGPVGGARVGYINGEYVLNPHLDEMDESSLDLVVAGTYDAVLMVESEAKELNEEVMLGAVMFGHKGFQPVLDAIIKLAEVAAKEPRDFQPEDYSELEAEMLKHFEAELREGYKITQKADRYAAVDAVKAKVKAHFFPEGVEPKYTAEVIGAVFKHLQAKIVRWNILDTKSRIDGRDLSTVRPIVSEVGLLPRTHGSALFTRGETQAIVVATLGTGEDEQYVDSLTGMYKERFLLHYNFPPYSVGETGRMGSPGRREIGHGKLAWRAIRPMLPTAEQFPYTLRVVSEITESNGSSSMATVCGTSLALMDAGVPLAKPVAGIAMGLILEGDRFAVLSDILGDEDHLGDMDFKVAGTADGITSLQMDIKIAGITEEIMKVALGQAQGGRAHILGEMAKAITESRGQLGEFAPRIEVMNIPVDKIREVIGSGGKVIREIVEKTGAKINIEDDGTVKIASSSGKEIEAARKWIHSIVAEPEIGQIYEGTVVKTADFGAFVNFFGARDGLVHISQLASERVAKTQDVVKEGDKVWVKLLGFDERGKVRLSMKVVDQATGQEIPNEKKKEEAAE</sequence>
<comment type="function">
    <text evidence="1">Involved in mRNA degradation. Catalyzes the phosphorolysis of single-stranded polyribonucleotides processively in the 3'- to 5'-direction.</text>
</comment>
<comment type="catalytic activity">
    <reaction evidence="1">
        <text>RNA(n+1) + phosphate = RNA(n) + a ribonucleoside 5'-diphosphate</text>
        <dbReference type="Rhea" id="RHEA:22096"/>
        <dbReference type="Rhea" id="RHEA-COMP:14527"/>
        <dbReference type="Rhea" id="RHEA-COMP:17342"/>
        <dbReference type="ChEBI" id="CHEBI:43474"/>
        <dbReference type="ChEBI" id="CHEBI:57930"/>
        <dbReference type="ChEBI" id="CHEBI:140395"/>
        <dbReference type="EC" id="2.7.7.8"/>
    </reaction>
</comment>
<comment type="cofactor">
    <cofactor evidence="1">
        <name>Mg(2+)</name>
        <dbReference type="ChEBI" id="CHEBI:18420"/>
    </cofactor>
</comment>
<comment type="subcellular location">
    <subcellularLocation>
        <location evidence="1">Cytoplasm</location>
    </subcellularLocation>
</comment>
<comment type="similarity">
    <text evidence="1">Belongs to the polyribonucleotide nucleotidyltransferase family.</text>
</comment>
<organism>
    <name type="scientific">Rhizobium leguminosarum bv. trifolii (strain WSM2304)</name>
    <dbReference type="NCBI Taxonomy" id="395492"/>
    <lineage>
        <taxon>Bacteria</taxon>
        <taxon>Pseudomonadati</taxon>
        <taxon>Pseudomonadota</taxon>
        <taxon>Alphaproteobacteria</taxon>
        <taxon>Hyphomicrobiales</taxon>
        <taxon>Rhizobiaceae</taxon>
        <taxon>Rhizobium/Agrobacterium group</taxon>
        <taxon>Rhizobium</taxon>
    </lineage>
</organism>
<name>PNP_RHILW</name>
<feature type="chain" id="PRO_1000192484" description="Polyribonucleotide nucleotidyltransferase">
    <location>
        <begin position="1"/>
        <end position="712"/>
    </location>
</feature>
<feature type="domain" description="KH" evidence="1">
    <location>
        <begin position="554"/>
        <end position="613"/>
    </location>
</feature>
<feature type="domain" description="S1 motif" evidence="1">
    <location>
        <begin position="623"/>
        <end position="691"/>
    </location>
</feature>
<feature type="binding site" evidence="1">
    <location>
        <position position="487"/>
    </location>
    <ligand>
        <name>Mg(2+)</name>
        <dbReference type="ChEBI" id="CHEBI:18420"/>
    </ligand>
</feature>
<feature type="binding site" evidence="1">
    <location>
        <position position="493"/>
    </location>
    <ligand>
        <name>Mg(2+)</name>
        <dbReference type="ChEBI" id="CHEBI:18420"/>
    </ligand>
</feature>
<proteinExistence type="inferred from homology"/>
<dbReference type="EC" id="2.7.7.8" evidence="1"/>
<dbReference type="EMBL" id="CP001191">
    <property type="protein sequence ID" value="ACI57324.1"/>
    <property type="molecule type" value="Genomic_DNA"/>
</dbReference>
<dbReference type="RefSeq" id="WP_003589352.1">
    <property type="nucleotide sequence ID" value="NC_011369.1"/>
</dbReference>
<dbReference type="SMR" id="B5ZW24"/>
<dbReference type="STRING" id="395492.Rleg2_4062"/>
<dbReference type="KEGG" id="rlt:Rleg2_4062"/>
<dbReference type="eggNOG" id="COG1185">
    <property type="taxonomic scope" value="Bacteria"/>
</dbReference>
<dbReference type="HOGENOM" id="CLU_004217_2_2_5"/>
<dbReference type="Proteomes" id="UP000008330">
    <property type="component" value="Chromosome"/>
</dbReference>
<dbReference type="GO" id="GO:0005829">
    <property type="term" value="C:cytosol"/>
    <property type="evidence" value="ECO:0007669"/>
    <property type="project" value="TreeGrafter"/>
</dbReference>
<dbReference type="GO" id="GO:0000175">
    <property type="term" value="F:3'-5'-RNA exonuclease activity"/>
    <property type="evidence" value="ECO:0007669"/>
    <property type="project" value="TreeGrafter"/>
</dbReference>
<dbReference type="GO" id="GO:0000287">
    <property type="term" value="F:magnesium ion binding"/>
    <property type="evidence" value="ECO:0007669"/>
    <property type="project" value="UniProtKB-UniRule"/>
</dbReference>
<dbReference type="GO" id="GO:0004654">
    <property type="term" value="F:polyribonucleotide nucleotidyltransferase activity"/>
    <property type="evidence" value="ECO:0007669"/>
    <property type="project" value="UniProtKB-UniRule"/>
</dbReference>
<dbReference type="GO" id="GO:0003723">
    <property type="term" value="F:RNA binding"/>
    <property type="evidence" value="ECO:0007669"/>
    <property type="project" value="UniProtKB-UniRule"/>
</dbReference>
<dbReference type="GO" id="GO:0006402">
    <property type="term" value="P:mRNA catabolic process"/>
    <property type="evidence" value="ECO:0007669"/>
    <property type="project" value="UniProtKB-UniRule"/>
</dbReference>
<dbReference type="GO" id="GO:0006396">
    <property type="term" value="P:RNA processing"/>
    <property type="evidence" value="ECO:0007669"/>
    <property type="project" value="InterPro"/>
</dbReference>
<dbReference type="CDD" id="cd02393">
    <property type="entry name" value="KH-I_PNPase"/>
    <property type="match status" value="1"/>
</dbReference>
<dbReference type="CDD" id="cd11363">
    <property type="entry name" value="RNase_PH_PNPase_1"/>
    <property type="match status" value="1"/>
</dbReference>
<dbReference type="CDD" id="cd11364">
    <property type="entry name" value="RNase_PH_PNPase_2"/>
    <property type="match status" value="1"/>
</dbReference>
<dbReference type="CDD" id="cd04472">
    <property type="entry name" value="S1_PNPase"/>
    <property type="match status" value="1"/>
</dbReference>
<dbReference type="FunFam" id="2.40.50.140:FF:000107">
    <property type="entry name" value="Polyribonucleotide nucleotidyltransferase"/>
    <property type="match status" value="1"/>
</dbReference>
<dbReference type="FunFam" id="3.30.1370.10:FF:000001">
    <property type="entry name" value="Polyribonucleotide nucleotidyltransferase"/>
    <property type="match status" value="1"/>
</dbReference>
<dbReference type="FunFam" id="3.30.230.70:FF:000001">
    <property type="entry name" value="Polyribonucleotide nucleotidyltransferase"/>
    <property type="match status" value="1"/>
</dbReference>
<dbReference type="FunFam" id="3.30.230.70:FF:000002">
    <property type="entry name" value="Polyribonucleotide nucleotidyltransferase"/>
    <property type="match status" value="1"/>
</dbReference>
<dbReference type="Gene3D" id="3.30.230.70">
    <property type="entry name" value="GHMP Kinase, N-terminal domain"/>
    <property type="match status" value="2"/>
</dbReference>
<dbReference type="Gene3D" id="3.30.1370.10">
    <property type="entry name" value="K Homology domain, type 1"/>
    <property type="match status" value="1"/>
</dbReference>
<dbReference type="Gene3D" id="2.40.50.140">
    <property type="entry name" value="Nucleic acid-binding proteins"/>
    <property type="match status" value="1"/>
</dbReference>
<dbReference type="HAMAP" id="MF_01595">
    <property type="entry name" value="PNPase"/>
    <property type="match status" value="1"/>
</dbReference>
<dbReference type="InterPro" id="IPR001247">
    <property type="entry name" value="ExoRNase_PH_dom1"/>
</dbReference>
<dbReference type="InterPro" id="IPR015847">
    <property type="entry name" value="ExoRNase_PH_dom2"/>
</dbReference>
<dbReference type="InterPro" id="IPR036345">
    <property type="entry name" value="ExoRNase_PH_dom2_sf"/>
</dbReference>
<dbReference type="InterPro" id="IPR004087">
    <property type="entry name" value="KH_dom"/>
</dbReference>
<dbReference type="InterPro" id="IPR004088">
    <property type="entry name" value="KH_dom_type_1"/>
</dbReference>
<dbReference type="InterPro" id="IPR036612">
    <property type="entry name" value="KH_dom_type_1_sf"/>
</dbReference>
<dbReference type="InterPro" id="IPR012340">
    <property type="entry name" value="NA-bd_OB-fold"/>
</dbReference>
<dbReference type="InterPro" id="IPR012162">
    <property type="entry name" value="PNPase"/>
</dbReference>
<dbReference type="InterPro" id="IPR027408">
    <property type="entry name" value="PNPase/RNase_PH_dom_sf"/>
</dbReference>
<dbReference type="InterPro" id="IPR015848">
    <property type="entry name" value="PNPase_PH_RNA-bd_bac/org-type"/>
</dbReference>
<dbReference type="InterPro" id="IPR020568">
    <property type="entry name" value="Ribosomal_Su5_D2-typ_SF"/>
</dbReference>
<dbReference type="InterPro" id="IPR003029">
    <property type="entry name" value="S1_domain"/>
</dbReference>
<dbReference type="NCBIfam" id="TIGR03591">
    <property type="entry name" value="polynuc_phos"/>
    <property type="match status" value="1"/>
</dbReference>
<dbReference type="NCBIfam" id="NF008805">
    <property type="entry name" value="PRK11824.1"/>
    <property type="match status" value="1"/>
</dbReference>
<dbReference type="PANTHER" id="PTHR11252">
    <property type="entry name" value="POLYRIBONUCLEOTIDE NUCLEOTIDYLTRANSFERASE"/>
    <property type="match status" value="1"/>
</dbReference>
<dbReference type="PANTHER" id="PTHR11252:SF0">
    <property type="entry name" value="POLYRIBONUCLEOTIDE NUCLEOTIDYLTRANSFERASE 1, MITOCHONDRIAL"/>
    <property type="match status" value="1"/>
</dbReference>
<dbReference type="Pfam" id="PF00013">
    <property type="entry name" value="KH_1"/>
    <property type="match status" value="1"/>
</dbReference>
<dbReference type="Pfam" id="PF03726">
    <property type="entry name" value="PNPase"/>
    <property type="match status" value="1"/>
</dbReference>
<dbReference type="Pfam" id="PF01138">
    <property type="entry name" value="RNase_PH"/>
    <property type="match status" value="2"/>
</dbReference>
<dbReference type="Pfam" id="PF03725">
    <property type="entry name" value="RNase_PH_C"/>
    <property type="match status" value="2"/>
</dbReference>
<dbReference type="Pfam" id="PF00575">
    <property type="entry name" value="S1"/>
    <property type="match status" value="1"/>
</dbReference>
<dbReference type="PIRSF" id="PIRSF005499">
    <property type="entry name" value="PNPase"/>
    <property type="match status" value="1"/>
</dbReference>
<dbReference type="SMART" id="SM00322">
    <property type="entry name" value="KH"/>
    <property type="match status" value="1"/>
</dbReference>
<dbReference type="SMART" id="SM00316">
    <property type="entry name" value="S1"/>
    <property type="match status" value="1"/>
</dbReference>
<dbReference type="SUPFAM" id="SSF54791">
    <property type="entry name" value="Eukaryotic type KH-domain (KH-domain type I)"/>
    <property type="match status" value="1"/>
</dbReference>
<dbReference type="SUPFAM" id="SSF50249">
    <property type="entry name" value="Nucleic acid-binding proteins"/>
    <property type="match status" value="1"/>
</dbReference>
<dbReference type="SUPFAM" id="SSF55666">
    <property type="entry name" value="Ribonuclease PH domain 2-like"/>
    <property type="match status" value="2"/>
</dbReference>
<dbReference type="SUPFAM" id="SSF54211">
    <property type="entry name" value="Ribosomal protein S5 domain 2-like"/>
    <property type="match status" value="2"/>
</dbReference>
<dbReference type="PROSITE" id="PS50084">
    <property type="entry name" value="KH_TYPE_1"/>
    <property type="match status" value="1"/>
</dbReference>
<dbReference type="PROSITE" id="PS50126">
    <property type="entry name" value="S1"/>
    <property type="match status" value="1"/>
</dbReference>
<evidence type="ECO:0000255" key="1">
    <source>
        <dbReference type="HAMAP-Rule" id="MF_01595"/>
    </source>
</evidence>
<protein>
    <recommendedName>
        <fullName evidence="1">Polyribonucleotide nucleotidyltransferase</fullName>
        <ecNumber evidence="1">2.7.7.8</ecNumber>
    </recommendedName>
    <alternativeName>
        <fullName evidence="1">Polynucleotide phosphorylase</fullName>
        <shortName evidence="1">PNPase</shortName>
    </alternativeName>
</protein>
<reference key="1">
    <citation type="journal article" date="2010" name="Stand. Genomic Sci.">
        <title>Complete genome sequence of Rhizobium leguminosarum bv trifolii strain WSM2304, an effective microsymbiont of the South American clover Trifolium polymorphum.</title>
        <authorList>
            <person name="Reeve W."/>
            <person name="O'Hara G."/>
            <person name="Chain P."/>
            <person name="Ardley J."/>
            <person name="Brau L."/>
            <person name="Nandesena K."/>
            <person name="Tiwari R."/>
            <person name="Malfatti S."/>
            <person name="Kiss H."/>
            <person name="Lapidus A."/>
            <person name="Copeland A."/>
            <person name="Nolan M."/>
            <person name="Land M."/>
            <person name="Ivanova N."/>
            <person name="Mavromatis K."/>
            <person name="Markowitz V."/>
            <person name="Kyrpides N."/>
            <person name="Melino V."/>
            <person name="Denton M."/>
            <person name="Yates R."/>
            <person name="Howieson J."/>
        </authorList>
    </citation>
    <scope>NUCLEOTIDE SEQUENCE [LARGE SCALE GENOMIC DNA]</scope>
    <source>
        <strain>WSM2304</strain>
    </source>
</reference>
<accession>B5ZW24</accession>
<gene>
    <name evidence="1" type="primary">pnp</name>
    <name type="ordered locus">Rleg2_4062</name>
</gene>
<keyword id="KW-0963">Cytoplasm</keyword>
<keyword id="KW-0460">Magnesium</keyword>
<keyword id="KW-0479">Metal-binding</keyword>
<keyword id="KW-0548">Nucleotidyltransferase</keyword>
<keyword id="KW-1185">Reference proteome</keyword>
<keyword id="KW-0694">RNA-binding</keyword>
<keyword id="KW-0808">Transferase</keyword>